<proteinExistence type="inferred from homology"/>
<feature type="chain" id="PRO_0000217814" description="Photosystem I assembly protein Ycf3">
    <location>
        <begin position="1"/>
        <end position="170"/>
    </location>
</feature>
<feature type="repeat" description="TPR 1">
    <location>
        <begin position="35"/>
        <end position="68"/>
    </location>
</feature>
<feature type="repeat" description="TPR 2">
    <location>
        <begin position="72"/>
        <end position="105"/>
    </location>
</feature>
<feature type="repeat" description="TPR 3">
    <location>
        <begin position="120"/>
        <end position="153"/>
    </location>
</feature>
<geneLocation type="chloroplast"/>
<accession>Q6ENH3</accession>
<gene>
    <name evidence="1" type="primary">ycf3</name>
</gene>
<keyword id="KW-0150">Chloroplast</keyword>
<keyword id="KW-0472">Membrane</keyword>
<keyword id="KW-0602">Photosynthesis</keyword>
<keyword id="KW-0934">Plastid</keyword>
<keyword id="KW-1185">Reference proteome</keyword>
<keyword id="KW-0677">Repeat</keyword>
<keyword id="KW-0793">Thylakoid</keyword>
<keyword id="KW-0802">TPR repeat</keyword>
<organism>
    <name type="scientific">Oryza nivara</name>
    <name type="common">Indian wild rice</name>
    <name type="synonym">Oryza sativa f. spontanea</name>
    <dbReference type="NCBI Taxonomy" id="4536"/>
    <lineage>
        <taxon>Eukaryota</taxon>
        <taxon>Viridiplantae</taxon>
        <taxon>Streptophyta</taxon>
        <taxon>Embryophyta</taxon>
        <taxon>Tracheophyta</taxon>
        <taxon>Spermatophyta</taxon>
        <taxon>Magnoliopsida</taxon>
        <taxon>Liliopsida</taxon>
        <taxon>Poales</taxon>
        <taxon>Poaceae</taxon>
        <taxon>BOP clade</taxon>
        <taxon>Oryzoideae</taxon>
        <taxon>Oryzeae</taxon>
        <taxon>Oryzinae</taxon>
        <taxon>Oryza</taxon>
    </lineage>
</organism>
<comment type="function">
    <text evidence="1">Essential for the assembly of the photosystem I (PSI) complex. May act as a chaperone-like factor to guide the assembly of the PSI subunits.</text>
</comment>
<comment type="subcellular location">
    <subcellularLocation>
        <location evidence="1">Plastid</location>
        <location evidence="1">Chloroplast thylakoid membrane</location>
        <topology evidence="1">Peripheral membrane protein</topology>
    </subcellularLocation>
</comment>
<comment type="similarity">
    <text evidence="1">Belongs to the Ycf3 family.</text>
</comment>
<evidence type="ECO:0000255" key="1">
    <source>
        <dbReference type="HAMAP-Rule" id="MF_00439"/>
    </source>
</evidence>
<evidence type="ECO:0000312" key="2">
    <source>
        <dbReference type="Proteomes" id="UP000006591"/>
    </source>
</evidence>
<protein>
    <recommendedName>
        <fullName evidence="1">Photosystem I assembly protein Ycf3</fullName>
    </recommendedName>
</protein>
<dbReference type="EMBL" id="AP006728">
    <property type="protein sequence ID" value="BAD26779.1"/>
    <property type="molecule type" value="Genomic_DNA"/>
</dbReference>
<dbReference type="RefSeq" id="YP_052750.1">
    <property type="nucleotide sequence ID" value="NC_005973.1"/>
</dbReference>
<dbReference type="SMR" id="Q6ENH3"/>
<dbReference type="STRING" id="4536.Q6ENH3"/>
<dbReference type="GeneID" id="2885904"/>
<dbReference type="Proteomes" id="UP000006591">
    <property type="component" value="Chloroplast"/>
</dbReference>
<dbReference type="GO" id="GO:0009535">
    <property type="term" value="C:chloroplast thylakoid membrane"/>
    <property type="evidence" value="ECO:0007669"/>
    <property type="project" value="UniProtKB-SubCell"/>
</dbReference>
<dbReference type="GO" id="GO:0009536">
    <property type="term" value="C:plastid"/>
    <property type="evidence" value="ECO:0000305"/>
    <property type="project" value="Gramene"/>
</dbReference>
<dbReference type="GO" id="GO:0015979">
    <property type="term" value="P:photosynthesis"/>
    <property type="evidence" value="ECO:0007669"/>
    <property type="project" value="UniProtKB-UniRule"/>
</dbReference>
<dbReference type="FunFam" id="1.25.40.10:FF:000004">
    <property type="entry name" value="Photosystem I assembly protein Ycf3"/>
    <property type="match status" value="1"/>
</dbReference>
<dbReference type="Gene3D" id="1.25.40.10">
    <property type="entry name" value="Tetratricopeptide repeat domain"/>
    <property type="match status" value="1"/>
</dbReference>
<dbReference type="HAMAP" id="MF_00439">
    <property type="entry name" value="Ycf3"/>
    <property type="match status" value="1"/>
</dbReference>
<dbReference type="InterPro" id="IPR022818">
    <property type="entry name" value="PSI_Ycf3_assembly"/>
</dbReference>
<dbReference type="InterPro" id="IPR011990">
    <property type="entry name" value="TPR-like_helical_dom_sf"/>
</dbReference>
<dbReference type="InterPro" id="IPR019734">
    <property type="entry name" value="TPR_rpt"/>
</dbReference>
<dbReference type="InterPro" id="IPR051685">
    <property type="entry name" value="Ycf3/AcsC/BcsC/TPR_MFPF"/>
</dbReference>
<dbReference type="NCBIfam" id="NF002725">
    <property type="entry name" value="PRK02603.1"/>
    <property type="match status" value="1"/>
</dbReference>
<dbReference type="PANTHER" id="PTHR44943">
    <property type="entry name" value="CELLULOSE SYNTHASE OPERON PROTEIN C"/>
    <property type="match status" value="1"/>
</dbReference>
<dbReference type="PANTHER" id="PTHR44943:SF8">
    <property type="entry name" value="TPR REPEAT-CONTAINING PROTEIN MJ0263"/>
    <property type="match status" value="1"/>
</dbReference>
<dbReference type="Pfam" id="PF00515">
    <property type="entry name" value="TPR_1"/>
    <property type="match status" value="1"/>
</dbReference>
<dbReference type="SMART" id="SM00028">
    <property type="entry name" value="TPR"/>
    <property type="match status" value="3"/>
</dbReference>
<dbReference type="SUPFAM" id="SSF48452">
    <property type="entry name" value="TPR-like"/>
    <property type="match status" value="1"/>
</dbReference>
<dbReference type="PROSITE" id="PS50005">
    <property type="entry name" value="TPR"/>
    <property type="match status" value="3"/>
</dbReference>
<dbReference type="PROSITE" id="PS50293">
    <property type="entry name" value="TPR_REGION"/>
    <property type="match status" value="1"/>
</dbReference>
<sequence>MPRSRINGNFIDKTFSIVANILLRIIPTTSGEKRAFTYYRDGMLAQSEGNYAEALQNYYEATRLEIDPYDRSYILYNIGLIHTSNGEHTKALEYYFRALERNPFLPQAFNNMAVICHYRGEQAILQGDSEIAEAWFDQAAEYWKQAIALTPGNYIEAQNWLKITKRFEFE</sequence>
<reference key="1">
    <citation type="journal article" date="2004" name="Gene">
        <title>The complete nucleotide sequence of wild rice (Oryza nivara) chloroplast genome: first genome wide comparative sequence analysis of wild and cultivated rice.</title>
        <authorList>
            <person name="Masood M.S."/>
            <person name="Nishikawa T."/>
            <person name="Fukuoka S."/>
            <person name="Njenga P.K."/>
            <person name="Tsudzuki T."/>
            <person name="Kadowaki K."/>
        </authorList>
    </citation>
    <scope>NUCLEOTIDE SEQUENCE [LARGE SCALE GENOMIC DNA]</scope>
    <source>
        <strain evidence="2">cv. SL10</strain>
    </source>
</reference>
<name>YCF3_ORYNI</name>